<feature type="chain" id="PRO_0000217089" description="Na(+)/H(+) antiporter subunit E1">
    <location>
        <begin position="1"/>
        <end position="159"/>
    </location>
</feature>
<feature type="transmembrane region" description="Helical" evidence="2">
    <location>
        <begin position="5"/>
        <end position="22"/>
    </location>
</feature>
<feature type="transmembrane region" description="Helical" evidence="2">
    <location>
        <begin position="27"/>
        <end position="45"/>
    </location>
</feature>
<feature type="transmembrane region" description="Helical" evidence="2">
    <location>
        <begin position="52"/>
        <end position="69"/>
    </location>
</feature>
<feature type="transmembrane region" description="Helical" evidence="2">
    <location>
        <begin position="100"/>
        <end position="122"/>
    </location>
</feature>
<dbReference type="EMBL" id="BX571856">
    <property type="protein sequence ID" value="CAG39916.1"/>
    <property type="molecule type" value="Genomic_DNA"/>
</dbReference>
<dbReference type="RefSeq" id="WP_000290674.1">
    <property type="nucleotide sequence ID" value="NC_002952.2"/>
</dbReference>
<dbReference type="SMR" id="Q6GIE0"/>
<dbReference type="KEGG" id="sar:SAR0910"/>
<dbReference type="HOGENOM" id="CLU_086615_3_2_9"/>
<dbReference type="Proteomes" id="UP000000596">
    <property type="component" value="Chromosome"/>
</dbReference>
<dbReference type="GO" id="GO:0005886">
    <property type="term" value="C:plasma membrane"/>
    <property type="evidence" value="ECO:0007669"/>
    <property type="project" value="UniProtKB-SubCell"/>
</dbReference>
<dbReference type="GO" id="GO:0015297">
    <property type="term" value="F:antiporter activity"/>
    <property type="evidence" value="ECO:0007669"/>
    <property type="project" value="UniProtKB-KW"/>
</dbReference>
<dbReference type="GO" id="GO:0008324">
    <property type="term" value="F:monoatomic cation transmembrane transporter activity"/>
    <property type="evidence" value="ECO:0007669"/>
    <property type="project" value="InterPro"/>
</dbReference>
<dbReference type="GO" id="GO:1902600">
    <property type="term" value="P:proton transmembrane transport"/>
    <property type="evidence" value="ECO:0007669"/>
    <property type="project" value="UniProtKB-KW"/>
</dbReference>
<dbReference type="GO" id="GO:0006814">
    <property type="term" value="P:sodium ion transport"/>
    <property type="evidence" value="ECO:0007669"/>
    <property type="project" value="UniProtKB-KW"/>
</dbReference>
<dbReference type="InterPro" id="IPR004847">
    <property type="entry name" value="Antiport_suE1"/>
</dbReference>
<dbReference type="InterPro" id="IPR002758">
    <property type="entry name" value="Cation_antiport_E"/>
</dbReference>
<dbReference type="NCBIfam" id="TIGR00942">
    <property type="entry name" value="2a6301s05"/>
    <property type="match status" value="1"/>
</dbReference>
<dbReference type="NCBIfam" id="NF009291">
    <property type="entry name" value="PRK12651.1-1"/>
    <property type="match status" value="1"/>
</dbReference>
<dbReference type="PANTHER" id="PTHR34584">
    <property type="entry name" value="NA(+)/H(+) ANTIPORTER SUBUNIT E1"/>
    <property type="match status" value="1"/>
</dbReference>
<dbReference type="PANTHER" id="PTHR34584:SF1">
    <property type="entry name" value="NA(+)_H(+) ANTIPORTER SUBUNIT E1"/>
    <property type="match status" value="1"/>
</dbReference>
<dbReference type="Pfam" id="PF01899">
    <property type="entry name" value="MNHE"/>
    <property type="match status" value="1"/>
</dbReference>
<dbReference type="PIRSF" id="PIRSF019239">
    <property type="entry name" value="MrpE"/>
    <property type="match status" value="1"/>
</dbReference>
<keyword id="KW-0050">Antiport</keyword>
<keyword id="KW-1003">Cell membrane</keyword>
<keyword id="KW-0375">Hydrogen ion transport</keyword>
<keyword id="KW-0406">Ion transport</keyword>
<keyword id="KW-0472">Membrane</keyword>
<keyword id="KW-0915">Sodium</keyword>
<keyword id="KW-0739">Sodium transport</keyword>
<keyword id="KW-0812">Transmembrane</keyword>
<keyword id="KW-1133">Transmembrane helix</keyword>
<keyword id="KW-0813">Transport</keyword>
<accession>Q6GIE0</accession>
<protein>
    <recommendedName>
        <fullName>Na(+)/H(+) antiporter subunit E1</fullName>
    </recommendedName>
    <alternativeName>
        <fullName>Mnh complex subunit E1</fullName>
    </alternativeName>
</protein>
<comment type="function">
    <text evidence="1">Mnh complex is a Na(+)/H(+) antiporter involved in Na(+) excretion.</text>
</comment>
<comment type="subunit">
    <text evidence="1">May form a heterooligomeric complex that consists of seven subunits: mnhA1, mnhB1, mnhC1, mnhD1, mnhE1, mnhF1 and mnhG1.</text>
</comment>
<comment type="subcellular location">
    <subcellularLocation>
        <location evidence="3">Cell membrane</location>
        <topology evidence="3">Multi-pass membrane protein</topology>
    </subcellularLocation>
</comment>
<comment type="similarity">
    <text evidence="3">Belongs to the CPA3 antiporters (TC 2.A.63) subunit E family.</text>
</comment>
<organism>
    <name type="scientific">Staphylococcus aureus (strain MRSA252)</name>
    <dbReference type="NCBI Taxonomy" id="282458"/>
    <lineage>
        <taxon>Bacteria</taxon>
        <taxon>Bacillati</taxon>
        <taxon>Bacillota</taxon>
        <taxon>Bacilli</taxon>
        <taxon>Bacillales</taxon>
        <taxon>Staphylococcaceae</taxon>
        <taxon>Staphylococcus</taxon>
    </lineage>
</organism>
<sequence length="159" mass="18319">MAVQLVLNFIIAVFWLFVTNSYTTNNFVLGFIFGLVLVYLLHRVLPGRFYVITLYRIIKLVIIFLIELIKANFDVLKIIIKPSIKNEPGFFVYHTDLKKDWQIVLLSNLITLTPGTVVLGVSDDRTKIYIHAIDFSTKEQEVESIKTSLEKIVREVGEI</sequence>
<gene>
    <name type="primary">mnhE1</name>
    <name type="ordered locus">SAR0910</name>
</gene>
<reference key="1">
    <citation type="journal article" date="2004" name="Proc. Natl. Acad. Sci. U.S.A.">
        <title>Complete genomes of two clinical Staphylococcus aureus strains: evidence for the rapid evolution of virulence and drug resistance.</title>
        <authorList>
            <person name="Holden M.T.G."/>
            <person name="Feil E.J."/>
            <person name="Lindsay J.A."/>
            <person name="Peacock S.J."/>
            <person name="Day N.P.J."/>
            <person name="Enright M.C."/>
            <person name="Foster T.J."/>
            <person name="Moore C.E."/>
            <person name="Hurst L."/>
            <person name="Atkin R."/>
            <person name="Barron A."/>
            <person name="Bason N."/>
            <person name="Bentley S.D."/>
            <person name="Chillingworth C."/>
            <person name="Chillingworth T."/>
            <person name="Churcher C."/>
            <person name="Clark L."/>
            <person name="Corton C."/>
            <person name="Cronin A."/>
            <person name="Doggett J."/>
            <person name="Dowd L."/>
            <person name="Feltwell T."/>
            <person name="Hance Z."/>
            <person name="Harris B."/>
            <person name="Hauser H."/>
            <person name="Holroyd S."/>
            <person name="Jagels K."/>
            <person name="James K.D."/>
            <person name="Lennard N."/>
            <person name="Line A."/>
            <person name="Mayes R."/>
            <person name="Moule S."/>
            <person name="Mungall K."/>
            <person name="Ormond D."/>
            <person name="Quail M.A."/>
            <person name="Rabbinowitsch E."/>
            <person name="Rutherford K.M."/>
            <person name="Sanders M."/>
            <person name="Sharp S."/>
            <person name="Simmonds M."/>
            <person name="Stevens K."/>
            <person name="Whitehead S."/>
            <person name="Barrell B.G."/>
            <person name="Spratt B.G."/>
            <person name="Parkhill J."/>
        </authorList>
    </citation>
    <scope>NUCLEOTIDE SEQUENCE [LARGE SCALE GENOMIC DNA]</scope>
    <source>
        <strain>MRSA252</strain>
    </source>
</reference>
<evidence type="ECO:0000250" key="1"/>
<evidence type="ECO:0000255" key="2"/>
<evidence type="ECO:0000305" key="3"/>
<name>MNHE1_STAAR</name>
<proteinExistence type="inferred from homology"/>